<sequence>MSRELAEWLGHMGIRDRRVLDAIAELDRARFVPPHLVAEAYADRPLPIGFGQTISQPFVVAFMTEALGLDGGERVLEVGTGSGYQTALLARLAGEVWSVEIVPGLAARARALLLGDLGLANVHLREGDGALGWPEAAPFDRILVTAAAPQVPPPLRAQLAPGGRMVLPVGEAESEQVLRVLERAADGIEEIEDLLPVRFVPLTHLPPAV</sequence>
<accession>Q2IIL9</accession>
<keyword id="KW-0963">Cytoplasm</keyword>
<keyword id="KW-0489">Methyltransferase</keyword>
<keyword id="KW-1185">Reference proteome</keyword>
<keyword id="KW-0949">S-adenosyl-L-methionine</keyword>
<keyword id="KW-0808">Transferase</keyword>
<dbReference type="EC" id="2.1.1.77" evidence="1"/>
<dbReference type="EMBL" id="CP000251">
    <property type="protein sequence ID" value="ABC81499.1"/>
    <property type="molecule type" value="Genomic_DNA"/>
</dbReference>
<dbReference type="RefSeq" id="WP_011420782.1">
    <property type="nucleotide sequence ID" value="NC_007760.1"/>
</dbReference>
<dbReference type="SMR" id="Q2IIL9"/>
<dbReference type="STRING" id="290397.Adeh_1726"/>
<dbReference type="KEGG" id="ade:Adeh_1726"/>
<dbReference type="eggNOG" id="COG2518">
    <property type="taxonomic scope" value="Bacteria"/>
</dbReference>
<dbReference type="HOGENOM" id="CLU_055432_2_0_7"/>
<dbReference type="OrthoDB" id="9810066at2"/>
<dbReference type="Proteomes" id="UP000001935">
    <property type="component" value="Chromosome"/>
</dbReference>
<dbReference type="GO" id="GO:0005737">
    <property type="term" value="C:cytoplasm"/>
    <property type="evidence" value="ECO:0007669"/>
    <property type="project" value="UniProtKB-SubCell"/>
</dbReference>
<dbReference type="GO" id="GO:0004719">
    <property type="term" value="F:protein-L-isoaspartate (D-aspartate) O-methyltransferase activity"/>
    <property type="evidence" value="ECO:0007669"/>
    <property type="project" value="UniProtKB-UniRule"/>
</dbReference>
<dbReference type="GO" id="GO:0032259">
    <property type="term" value="P:methylation"/>
    <property type="evidence" value="ECO:0007669"/>
    <property type="project" value="UniProtKB-KW"/>
</dbReference>
<dbReference type="GO" id="GO:0036211">
    <property type="term" value="P:protein modification process"/>
    <property type="evidence" value="ECO:0007669"/>
    <property type="project" value="UniProtKB-UniRule"/>
</dbReference>
<dbReference type="GO" id="GO:0030091">
    <property type="term" value="P:protein repair"/>
    <property type="evidence" value="ECO:0007669"/>
    <property type="project" value="UniProtKB-UniRule"/>
</dbReference>
<dbReference type="CDD" id="cd02440">
    <property type="entry name" value="AdoMet_MTases"/>
    <property type="match status" value="1"/>
</dbReference>
<dbReference type="FunFam" id="3.40.50.150:FF:000010">
    <property type="entry name" value="Protein-L-isoaspartate O-methyltransferase"/>
    <property type="match status" value="1"/>
</dbReference>
<dbReference type="Gene3D" id="3.40.50.150">
    <property type="entry name" value="Vaccinia Virus protein VP39"/>
    <property type="match status" value="1"/>
</dbReference>
<dbReference type="HAMAP" id="MF_00090">
    <property type="entry name" value="PIMT"/>
    <property type="match status" value="1"/>
</dbReference>
<dbReference type="InterPro" id="IPR000682">
    <property type="entry name" value="PCMT"/>
</dbReference>
<dbReference type="InterPro" id="IPR029063">
    <property type="entry name" value="SAM-dependent_MTases_sf"/>
</dbReference>
<dbReference type="NCBIfam" id="TIGR00080">
    <property type="entry name" value="pimt"/>
    <property type="match status" value="1"/>
</dbReference>
<dbReference type="NCBIfam" id="NF001453">
    <property type="entry name" value="PRK00312.1"/>
    <property type="match status" value="1"/>
</dbReference>
<dbReference type="PANTHER" id="PTHR11579">
    <property type="entry name" value="PROTEIN-L-ISOASPARTATE O-METHYLTRANSFERASE"/>
    <property type="match status" value="1"/>
</dbReference>
<dbReference type="PANTHER" id="PTHR11579:SF0">
    <property type="entry name" value="PROTEIN-L-ISOASPARTATE(D-ASPARTATE) O-METHYLTRANSFERASE"/>
    <property type="match status" value="1"/>
</dbReference>
<dbReference type="Pfam" id="PF01135">
    <property type="entry name" value="PCMT"/>
    <property type="match status" value="1"/>
</dbReference>
<dbReference type="SUPFAM" id="SSF53335">
    <property type="entry name" value="S-adenosyl-L-methionine-dependent methyltransferases"/>
    <property type="match status" value="1"/>
</dbReference>
<dbReference type="PROSITE" id="PS01279">
    <property type="entry name" value="PCMT"/>
    <property type="match status" value="1"/>
</dbReference>
<proteinExistence type="inferred from homology"/>
<name>PIMT_ANADE</name>
<comment type="function">
    <text evidence="1">Catalyzes the methyl esterification of L-isoaspartyl residues in peptides and proteins that result from spontaneous decomposition of normal L-aspartyl and L-asparaginyl residues. It plays a role in the repair and/or degradation of damaged proteins.</text>
</comment>
<comment type="catalytic activity">
    <reaction evidence="1">
        <text>[protein]-L-isoaspartate + S-adenosyl-L-methionine = [protein]-L-isoaspartate alpha-methyl ester + S-adenosyl-L-homocysteine</text>
        <dbReference type="Rhea" id="RHEA:12705"/>
        <dbReference type="Rhea" id="RHEA-COMP:12143"/>
        <dbReference type="Rhea" id="RHEA-COMP:12144"/>
        <dbReference type="ChEBI" id="CHEBI:57856"/>
        <dbReference type="ChEBI" id="CHEBI:59789"/>
        <dbReference type="ChEBI" id="CHEBI:90596"/>
        <dbReference type="ChEBI" id="CHEBI:90598"/>
        <dbReference type="EC" id="2.1.1.77"/>
    </reaction>
</comment>
<comment type="subcellular location">
    <subcellularLocation>
        <location evidence="1">Cytoplasm</location>
    </subcellularLocation>
</comment>
<comment type="similarity">
    <text evidence="1">Belongs to the methyltransferase superfamily. L-isoaspartyl/D-aspartyl protein methyltransferase family.</text>
</comment>
<organism>
    <name type="scientific">Anaeromyxobacter dehalogenans (strain 2CP-C)</name>
    <dbReference type="NCBI Taxonomy" id="290397"/>
    <lineage>
        <taxon>Bacteria</taxon>
        <taxon>Pseudomonadati</taxon>
        <taxon>Myxococcota</taxon>
        <taxon>Myxococcia</taxon>
        <taxon>Myxococcales</taxon>
        <taxon>Cystobacterineae</taxon>
        <taxon>Anaeromyxobacteraceae</taxon>
        <taxon>Anaeromyxobacter</taxon>
    </lineage>
</organism>
<gene>
    <name evidence="1" type="primary">pcm</name>
    <name type="ordered locus">Adeh_1726</name>
</gene>
<reference key="1">
    <citation type="submission" date="2006-01" db="EMBL/GenBank/DDBJ databases">
        <title>Complete sequence of Anaeromyxobacter dehalogenans 2CP-C.</title>
        <authorList>
            <person name="Copeland A."/>
            <person name="Lucas S."/>
            <person name="Lapidus A."/>
            <person name="Barry K."/>
            <person name="Detter J.C."/>
            <person name="Glavina T."/>
            <person name="Hammon N."/>
            <person name="Israni S."/>
            <person name="Pitluck S."/>
            <person name="Brettin T."/>
            <person name="Bruce D."/>
            <person name="Han C."/>
            <person name="Tapia R."/>
            <person name="Gilna P."/>
            <person name="Kiss H."/>
            <person name="Schmutz J."/>
            <person name="Larimer F."/>
            <person name="Land M."/>
            <person name="Kyrpides N."/>
            <person name="Anderson I."/>
            <person name="Sanford R.A."/>
            <person name="Ritalahti K.M."/>
            <person name="Thomas H.S."/>
            <person name="Kirby J.R."/>
            <person name="Zhulin I.B."/>
            <person name="Loeffler F.E."/>
            <person name="Richardson P."/>
        </authorList>
    </citation>
    <scope>NUCLEOTIDE SEQUENCE [LARGE SCALE GENOMIC DNA]</scope>
    <source>
        <strain>2CP-C</strain>
    </source>
</reference>
<evidence type="ECO:0000255" key="1">
    <source>
        <dbReference type="HAMAP-Rule" id="MF_00090"/>
    </source>
</evidence>
<protein>
    <recommendedName>
        <fullName evidence="1">Protein-L-isoaspartate O-methyltransferase</fullName>
        <ecNumber evidence="1">2.1.1.77</ecNumber>
    </recommendedName>
    <alternativeName>
        <fullName evidence="1">L-isoaspartyl protein carboxyl methyltransferase</fullName>
    </alternativeName>
    <alternativeName>
        <fullName evidence="1">Protein L-isoaspartyl methyltransferase</fullName>
    </alternativeName>
    <alternativeName>
        <fullName evidence="1">Protein-beta-aspartate methyltransferase</fullName>
        <shortName evidence="1">PIMT</shortName>
    </alternativeName>
</protein>
<feature type="chain" id="PRO_0000351812" description="Protein-L-isoaspartate O-methyltransferase">
    <location>
        <begin position="1"/>
        <end position="209"/>
    </location>
</feature>
<feature type="active site" evidence="1">
    <location>
        <position position="55"/>
    </location>
</feature>